<comment type="function">
    <text evidence="1 2">Transcription factor that modulates cell fate reprogramming from the somatic state to the pluripotent and neuronal fate. In liver, controls the expression of hormone-regulated gluconeogenic genes such as G6PC1 and PCK1. This regulation is independent of the insulin receptor activation. Also acts as a regulatory component of protein phosphatase 1 (PP1) complexes. Component of the PNUTS-PP1 protein phosphatase complex, a PP1 complex that regulates RNA polymerase II transcription pause-release (By similarity). PNUTS-PP1 also plays a role in the control of chromatin structure and cell cycle progression during the transition from mitosis into interphase (By similarity).</text>
</comment>
<comment type="activity regulation">
    <text evidence="2">In liver, recruited to target gene promoters following treatment with dexamethasone and cAMP. Binding is decreased in presence of insulin.</text>
</comment>
<comment type="subunit">
    <text evidence="1 2">Component of the PNUTS-PP1 phosphatase complex, composed of PPP1R10/PNUTS, TOX4, WDR82 and PPP1CA or PPP1CB or PPP1CC. Interacts with PPP1R10/PNUTS (By similarity). Interacts with FOXO1 and CREB1 (increased by cAMP); FOXO1 and CREB1 are required for full induction of TOX4-dependent activity and the interactions are inhibited by insulin (By similarity).</text>
</comment>
<comment type="subcellular location">
    <subcellularLocation>
        <location evidence="2">Nucleus</location>
    </subcellularLocation>
    <subcellularLocation>
        <location evidence="2">Chromosome</location>
    </subcellularLocation>
    <text evidence="2">Associated with chromatin; colocalizes with RNA polymerase II (Pol II) on chromatin.</text>
</comment>
<evidence type="ECO:0000250" key="1">
    <source>
        <dbReference type="UniProtKB" id="O94842"/>
    </source>
</evidence>
<evidence type="ECO:0000250" key="2">
    <source>
        <dbReference type="UniProtKB" id="Q8BU11"/>
    </source>
</evidence>
<evidence type="ECO:0000255" key="3"/>
<evidence type="ECO:0000255" key="4">
    <source>
        <dbReference type="PROSITE-ProRule" id="PRU00267"/>
    </source>
</evidence>
<evidence type="ECO:0000256" key="5">
    <source>
        <dbReference type="SAM" id="MobiDB-lite"/>
    </source>
</evidence>
<name>TOX4_BOVIN</name>
<feature type="chain" id="PRO_0000364348" description="TOX high mobility group box family member 4">
    <location>
        <begin position="1"/>
        <end position="619"/>
    </location>
</feature>
<feature type="DNA-binding region" description="HMG box" evidence="4">
    <location>
        <begin position="223"/>
        <end position="291"/>
    </location>
</feature>
<feature type="region of interest" description="Disordered" evidence="5">
    <location>
        <begin position="153"/>
        <end position="227"/>
    </location>
</feature>
<feature type="region of interest" description="Disordered" evidence="5">
    <location>
        <begin position="304"/>
        <end position="337"/>
    </location>
</feature>
<feature type="region of interest" description="Disordered" evidence="5">
    <location>
        <begin position="507"/>
        <end position="529"/>
    </location>
</feature>
<feature type="short sequence motif" description="Nuclear localization signal" evidence="3">
    <location>
        <begin position="213"/>
        <end position="218"/>
    </location>
</feature>
<feature type="compositionally biased region" description="Basic and acidic residues" evidence="5">
    <location>
        <begin position="183"/>
        <end position="193"/>
    </location>
</feature>
<feature type="compositionally biased region" description="Basic residues" evidence="5">
    <location>
        <begin position="208"/>
        <end position="218"/>
    </location>
</feature>
<feature type="compositionally biased region" description="Pro residues" evidence="5">
    <location>
        <begin position="307"/>
        <end position="319"/>
    </location>
</feature>
<feature type="compositionally biased region" description="Low complexity" evidence="5">
    <location>
        <begin position="320"/>
        <end position="337"/>
    </location>
</feature>
<feature type="compositionally biased region" description="Low complexity" evidence="5">
    <location>
        <begin position="512"/>
        <end position="524"/>
    </location>
</feature>
<feature type="modified residue" description="Phosphothreonine" evidence="2">
    <location>
        <position position="176"/>
    </location>
</feature>
<feature type="modified residue" description="Phosphoserine" evidence="1">
    <location>
        <position position="178"/>
    </location>
</feature>
<feature type="modified residue" description="Phosphoserine" evidence="1">
    <location>
        <position position="181"/>
    </location>
</feature>
<feature type="modified residue" description="Phosphoserine" evidence="1">
    <location>
        <position position="182"/>
    </location>
</feature>
<feature type="modified residue" description="Phosphothreonine" evidence="1">
    <location>
        <position position="313"/>
    </location>
</feature>
<feature type="modified residue" description="Phosphoserine" evidence="1">
    <location>
        <position position="315"/>
    </location>
</feature>
<feature type="modified residue" description="Asymmetric dimethylarginine" evidence="1">
    <location>
        <position position="479"/>
    </location>
</feature>
<feature type="modified residue" description="Phosphoserine" evidence="1">
    <location>
        <position position="548"/>
    </location>
</feature>
<feature type="modified residue" description="Phosphoserine" evidence="1">
    <location>
        <position position="550"/>
    </location>
</feature>
<feature type="modified residue" description="Phosphoserine" evidence="1">
    <location>
        <position position="558"/>
    </location>
</feature>
<feature type="modified residue" description="Phosphoserine" evidence="1">
    <location>
        <position position="560"/>
    </location>
</feature>
<feature type="modified residue" description="Phosphoserine" evidence="1">
    <location>
        <position position="565"/>
    </location>
</feature>
<organism>
    <name type="scientific">Bos taurus</name>
    <name type="common">Bovine</name>
    <dbReference type="NCBI Taxonomy" id="9913"/>
    <lineage>
        <taxon>Eukaryota</taxon>
        <taxon>Metazoa</taxon>
        <taxon>Chordata</taxon>
        <taxon>Craniata</taxon>
        <taxon>Vertebrata</taxon>
        <taxon>Euteleostomi</taxon>
        <taxon>Mammalia</taxon>
        <taxon>Eutheria</taxon>
        <taxon>Laurasiatheria</taxon>
        <taxon>Artiodactyla</taxon>
        <taxon>Ruminantia</taxon>
        <taxon>Pecora</taxon>
        <taxon>Bovidae</taxon>
        <taxon>Bovinae</taxon>
        <taxon>Bos</taxon>
    </lineage>
</organism>
<dbReference type="EMBL" id="BC119929">
    <property type="protein sequence ID" value="AAI19930.1"/>
    <property type="molecule type" value="mRNA"/>
</dbReference>
<dbReference type="RefSeq" id="NP_001069175.1">
    <property type="nucleotide sequence ID" value="NM_001075707.1"/>
</dbReference>
<dbReference type="SMR" id="Q0P5K4"/>
<dbReference type="FunCoup" id="Q0P5K4">
    <property type="interactions" value="4772"/>
</dbReference>
<dbReference type="STRING" id="9913.ENSBTAP00000020149"/>
<dbReference type="PaxDb" id="9913-ENSBTAP00000020149"/>
<dbReference type="GeneID" id="515314"/>
<dbReference type="KEGG" id="bta:515314"/>
<dbReference type="CTD" id="9878"/>
<dbReference type="VEuPathDB" id="HostDB:ENSBTAG00000015146"/>
<dbReference type="eggNOG" id="KOG0381">
    <property type="taxonomic scope" value="Eukaryota"/>
</dbReference>
<dbReference type="HOGENOM" id="CLU_030650_0_0_1"/>
<dbReference type="InParanoid" id="Q0P5K4"/>
<dbReference type="OMA" id="FLSGAEX"/>
<dbReference type="OrthoDB" id="10027956at2759"/>
<dbReference type="TreeFam" id="TF106481"/>
<dbReference type="Proteomes" id="UP000009136">
    <property type="component" value="Chromosome 10"/>
</dbReference>
<dbReference type="Bgee" id="ENSBTAG00000015146">
    <property type="expression patterns" value="Expressed in semen and 107 other cell types or tissues"/>
</dbReference>
<dbReference type="GO" id="GO:0005634">
    <property type="term" value="C:nucleus"/>
    <property type="evidence" value="ECO:0000318"/>
    <property type="project" value="GO_Central"/>
</dbReference>
<dbReference type="GO" id="GO:0072357">
    <property type="term" value="C:PTW/PP1 phosphatase complex"/>
    <property type="evidence" value="ECO:0000250"/>
    <property type="project" value="UniProtKB"/>
</dbReference>
<dbReference type="GO" id="GO:0031490">
    <property type="term" value="F:chromatin DNA binding"/>
    <property type="evidence" value="ECO:0000318"/>
    <property type="project" value="GO_Central"/>
</dbReference>
<dbReference type="GO" id="GO:0032968">
    <property type="term" value="P:positive regulation of transcription elongation by RNA polymerase II"/>
    <property type="evidence" value="ECO:0000250"/>
    <property type="project" value="UniProtKB"/>
</dbReference>
<dbReference type="GO" id="GO:0006357">
    <property type="term" value="P:regulation of transcription by RNA polymerase II"/>
    <property type="evidence" value="ECO:0000318"/>
    <property type="project" value="GO_Central"/>
</dbReference>
<dbReference type="GO" id="GO:0001111">
    <property type="term" value="P:RNA polymerase II promoter clearance"/>
    <property type="evidence" value="ECO:0000250"/>
    <property type="project" value="UniProtKB"/>
</dbReference>
<dbReference type="CDD" id="cd21995">
    <property type="entry name" value="HMG-box_TOX-like"/>
    <property type="match status" value="1"/>
</dbReference>
<dbReference type="FunFam" id="1.10.30.10:FF:000005">
    <property type="entry name" value="TOX high mobility group box family member 3"/>
    <property type="match status" value="1"/>
</dbReference>
<dbReference type="Gene3D" id="1.10.30.10">
    <property type="entry name" value="High mobility group box domain"/>
    <property type="match status" value="1"/>
</dbReference>
<dbReference type="InterPro" id="IPR009071">
    <property type="entry name" value="HMG_box_dom"/>
</dbReference>
<dbReference type="InterPro" id="IPR036910">
    <property type="entry name" value="HMG_box_dom_sf"/>
</dbReference>
<dbReference type="InterPro" id="IPR051365">
    <property type="entry name" value="TOX_HMG-box_domain"/>
</dbReference>
<dbReference type="PANTHER" id="PTHR45781">
    <property type="entry name" value="AGAP000281-PA"/>
    <property type="match status" value="1"/>
</dbReference>
<dbReference type="PANTHER" id="PTHR45781:SF2">
    <property type="entry name" value="TOX HIGH MOBILITY GROUP BOX FAMILY MEMBER 4"/>
    <property type="match status" value="1"/>
</dbReference>
<dbReference type="Pfam" id="PF00505">
    <property type="entry name" value="HMG_box"/>
    <property type="match status" value="1"/>
</dbReference>
<dbReference type="PRINTS" id="PR00886">
    <property type="entry name" value="HIGHMOBLTY12"/>
</dbReference>
<dbReference type="SMART" id="SM00398">
    <property type="entry name" value="HMG"/>
    <property type="match status" value="1"/>
</dbReference>
<dbReference type="SUPFAM" id="SSF47095">
    <property type="entry name" value="HMG-box"/>
    <property type="match status" value="1"/>
</dbReference>
<dbReference type="PROSITE" id="PS50118">
    <property type="entry name" value="HMG_BOX_2"/>
    <property type="match status" value="1"/>
</dbReference>
<protein>
    <recommendedName>
        <fullName>TOX high mobility group box family member 4</fullName>
    </recommendedName>
</protein>
<keyword id="KW-0158">Chromosome</keyword>
<keyword id="KW-0238">DNA-binding</keyword>
<keyword id="KW-0488">Methylation</keyword>
<keyword id="KW-0539">Nucleus</keyword>
<keyword id="KW-0597">Phosphoprotein</keyword>
<keyword id="KW-1185">Reference proteome</keyword>
<keyword id="KW-0804">Transcription</keyword>
<keyword id="KW-0805">Transcription regulation</keyword>
<reference key="1">
    <citation type="submission" date="2006-08" db="EMBL/GenBank/DDBJ databases">
        <authorList>
            <consortium name="NIH - Mammalian Gene Collection (MGC) project"/>
        </authorList>
    </citation>
    <scope>NUCLEOTIDE SEQUENCE [LARGE SCALE MRNA]</scope>
    <source>
        <strain>Hereford</strain>
        <tissue>Fetal skin</tissue>
    </source>
</reference>
<gene>
    <name type="primary">TOX4</name>
</gene>
<sequence length="619" mass="66087">MEFPGGNDNYLTITGPSHPFLSGAETFHTPSLGDEEFEIPPISLDSDPSLAVSDVVGHFDDLADPSSSQDGSFSAQYGVQTLDMPVGMTHGLMEQGGGLLSGGLTMDLDHSIGTQYSANPPVTIDVPMTDMTSGLMGHSQLTTIDQSELSSQLGLSLGGGTILPPAQSPEDRLSTTPSPTSSLHEDGVEEFRRQPPSQKTVVVEAGKKQKAPKKRKKKDPNEPQKPVSAYALFFRDTQAAIKGQNPNATFGEVSKIVASMWDSLGEEQKQVYKRKTEAAKKEYLKALAAYKDNQECQATVETVDMDPAPPSQTPSPPPVAAADPASPAPASTEPPALSPSIVVNSTLSSYVANQASSGAGGQPNITKLIITKQMLPSSITMSQGGMVTVIPATVVTSRGLQLGQTSTATIQPSQQAQIVTRSVLQAAAAAAASMQLPPPRLQPPPLQQMPQPPTQQQVTILQQPPPLQAMQQPPPQKFRINLQQQPPPLQVKIVPPPTLKMQTTLVPPPVESSPEQPVNNSPETHTVEETTPETICEMITDVVPEVESPSQMDVELVSGSPMTLSPQPRCVRSGCENPPVVSKDWDNEYCSNECVVKHCRDVFLAWVASRNSNTVVFVK</sequence>
<proteinExistence type="evidence at transcript level"/>
<accession>Q0P5K4</accession>